<accession>Q7M841</accession>
<sequence length="360" mass="38819">MNRLGELWVLTTFGESHGAGIGCVLDGVPAGLRVDEEFLNLELSRRRPGQSLYSTPRKESDRVEILSGVMEGFTTGTPLAMFIPNENQKSSDYESIRSIFRPGHADFTYHYKYGLRDHRGGGRSSARETAARVAGGAVAKMFLKELGISIFSGVFQVGEHTSDVRDFAHARKSVVNALDPLMEELFKEEIEKARGAHDSIGGAIEVRAKGMPIGLGEPLYHKLDGALGGALMGLNAVKAVEIGEGLSAARLKGSENNDPLRLEGFKSNHAGGILGGISNGSELVARVYFKPTPSIFLPQETLNEEGDEVICALKGRHDPCVAIRGGVVCEALVALVLADMALLRLGNRLQDVKEFYGKGR</sequence>
<protein>
    <recommendedName>
        <fullName evidence="1">Chorismate synthase</fullName>
        <shortName evidence="1">CS</shortName>
        <ecNumber evidence="1">4.2.3.5</ecNumber>
    </recommendedName>
    <alternativeName>
        <fullName evidence="1">5-enolpyruvylshikimate-3-phosphate phospholyase</fullName>
    </alternativeName>
</protein>
<comment type="function">
    <text evidence="1">Catalyzes the anti-1,4-elimination of the C-3 phosphate and the C-6 proR hydrogen from 5-enolpyruvylshikimate-3-phosphate (EPSP) to yield chorismate, which is the branch point compound that serves as the starting substrate for the three terminal pathways of aromatic amino acid biosynthesis. This reaction introduces a second double bond into the aromatic ring system.</text>
</comment>
<comment type="catalytic activity">
    <reaction evidence="1">
        <text>5-O-(1-carboxyvinyl)-3-phosphoshikimate = chorismate + phosphate</text>
        <dbReference type="Rhea" id="RHEA:21020"/>
        <dbReference type="ChEBI" id="CHEBI:29748"/>
        <dbReference type="ChEBI" id="CHEBI:43474"/>
        <dbReference type="ChEBI" id="CHEBI:57701"/>
        <dbReference type="EC" id="4.2.3.5"/>
    </reaction>
</comment>
<comment type="cofactor">
    <cofactor evidence="1">
        <name>FMNH2</name>
        <dbReference type="ChEBI" id="CHEBI:57618"/>
    </cofactor>
    <text evidence="1">Reduced FMN (FMNH(2)).</text>
</comment>
<comment type="pathway">
    <text evidence="1">Metabolic intermediate biosynthesis; chorismate biosynthesis; chorismate from D-erythrose 4-phosphate and phosphoenolpyruvate: step 7/7.</text>
</comment>
<comment type="subunit">
    <text evidence="1">Homotetramer.</text>
</comment>
<comment type="similarity">
    <text evidence="1">Belongs to the chorismate synthase family.</text>
</comment>
<organism>
    <name type="scientific">Wolinella succinogenes (strain ATCC 29543 / DSM 1740 / CCUG 13145 / JCM 31913 / LMG 7466 / NCTC 11488 / FDC 602W)</name>
    <name type="common">Vibrio succinogenes</name>
    <dbReference type="NCBI Taxonomy" id="273121"/>
    <lineage>
        <taxon>Bacteria</taxon>
        <taxon>Pseudomonadati</taxon>
        <taxon>Campylobacterota</taxon>
        <taxon>Epsilonproteobacteria</taxon>
        <taxon>Campylobacterales</taxon>
        <taxon>Helicobacteraceae</taxon>
        <taxon>Wolinella</taxon>
    </lineage>
</organism>
<name>AROC_WOLSU</name>
<proteinExistence type="inferred from homology"/>
<feature type="chain" id="PRO_0000140677" description="Chorismate synthase">
    <location>
        <begin position="1"/>
        <end position="360"/>
    </location>
</feature>
<feature type="binding site" evidence="1">
    <location>
        <position position="46"/>
    </location>
    <ligand>
        <name>NADP(+)</name>
        <dbReference type="ChEBI" id="CHEBI:58349"/>
    </ligand>
</feature>
<feature type="binding site" evidence="1">
    <location>
        <begin position="123"/>
        <end position="125"/>
    </location>
    <ligand>
        <name>FMN</name>
        <dbReference type="ChEBI" id="CHEBI:58210"/>
    </ligand>
</feature>
<feature type="binding site" evidence="1">
    <location>
        <begin position="235"/>
        <end position="236"/>
    </location>
    <ligand>
        <name>FMN</name>
        <dbReference type="ChEBI" id="CHEBI:58210"/>
    </ligand>
</feature>
<feature type="binding site" evidence="1">
    <location>
        <position position="275"/>
    </location>
    <ligand>
        <name>FMN</name>
        <dbReference type="ChEBI" id="CHEBI:58210"/>
    </ligand>
</feature>
<feature type="binding site" evidence="1">
    <location>
        <begin position="290"/>
        <end position="294"/>
    </location>
    <ligand>
        <name>FMN</name>
        <dbReference type="ChEBI" id="CHEBI:58210"/>
    </ligand>
</feature>
<feature type="binding site" evidence="1">
    <location>
        <position position="316"/>
    </location>
    <ligand>
        <name>FMN</name>
        <dbReference type="ChEBI" id="CHEBI:58210"/>
    </ligand>
</feature>
<dbReference type="EC" id="4.2.3.5" evidence="1"/>
<dbReference type="EMBL" id="BX571662">
    <property type="protein sequence ID" value="CAE10907.1"/>
    <property type="molecule type" value="Genomic_DNA"/>
</dbReference>
<dbReference type="RefSeq" id="WP_011139690.1">
    <property type="nucleotide sequence ID" value="NC_005090.1"/>
</dbReference>
<dbReference type="SMR" id="Q7M841"/>
<dbReference type="STRING" id="273121.WS1897"/>
<dbReference type="KEGG" id="wsu:WS1897"/>
<dbReference type="eggNOG" id="COG0082">
    <property type="taxonomic scope" value="Bacteria"/>
</dbReference>
<dbReference type="HOGENOM" id="CLU_034547_0_2_7"/>
<dbReference type="UniPathway" id="UPA00053">
    <property type="reaction ID" value="UER00090"/>
</dbReference>
<dbReference type="Proteomes" id="UP000000422">
    <property type="component" value="Chromosome"/>
</dbReference>
<dbReference type="GO" id="GO:0005829">
    <property type="term" value="C:cytosol"/>
    <property type="evidence" value="ECO:0007669"/>
    <property type="project" value="TreeGrafter"/>
</dbReference>
<dbReference type="GO" id="GO:0004107">
    <property type="term" value="F:chorismate synthase activity"/>
    <property type="evidence" value="ECO:0007669"/>
    <property type="project" value="UniProtKB-UniRule"/>
</dbReference>
<dbReference type="GO" id="GO:0010181">
    <property type="term" value="F:FMN binding"/>
    <property type="evidence" value="ECO:0007669"/>
    <property type="project" value="TreeGrafter"/>
</dbReference>
<dbReference type="GO" id="GO:0008652">
    <property type="term" value="P:amino acid biosynthetic process"/>
    <property type="evidence" value="ECO:0007669"/>
    <property type="project" value="UniProtKB-KW"/>
</dbReference>
<dbReference type="GO" id="GO:0009073">
    <property type="term" value="P:aromatic amino acid family biosynthetic process"/>
    <property type="evidence" value="ECO:0007669"/>
    <property type="project" value="UniProtKB-KW"/>
</dbReference>
<dbReference type="GO" id="GO:0009423">
    <property type="term" value="P:chorismate biosynthetic process"/>
    <property type="evidence" value="ECO:0007669"/>
    <property type="project" value="UniProtKB-UniRule"/>
</dbReference>
<dbReference type="CDD" id="cd07304">
    <property type="entry name" value="Chorismate_synthase"/>
    <property type="match status" value="1"/>
</dbReference>
<dbReference type="Gene3D" id="3.60.150.10">
    <property type="entry name" value="Chorismate synthase AroC"/>
    <property type="match status" value="1"/>
</dbReference>
<dbReference type="HAMAP" id="MF_00300">
    <property type="entry name" value="Chorismate_synth"/>
    <property type="match status" value="1"/>
</dbReference>
<dbReference type="InterPro" id="IPR000453">
    <property type="entry name" value="Chorismate_synth"/>
</dbReference>
<dbReference type="InterPro" id="IPR035904">
    <property type="entry name" value="Chorismate_synth_AroC_sf"/>
</dbReference>
<dbReference type="InterPro" id="IPR020541">
    <property type="entry name" value="Chorismate_synthase_CS"/>
</dbReference>
<dbReference type="NCBIfam" id="TIGR00033">
    <property type="entry name" value="aroC"/>
    <property type="match status" value="1"/>
</dbReference>
<dbReference type="NCBIfam" id="NF003793">
    <property type="entry name" value="PRK05382.1"/>
    <property type="match status" value="1"/>
</dbReference>
<dbReference type="PANTHER" id="PTHR21085">
    <property type="entry name" value="CHORISMATE SYNTHASE"/>
    <property type="match status" value="1"/>
</dbReference>
<dbReference type="PANTHER" id="PTHR21085:SF0">
    <property type="entry name" value="CHORISMATE SYNTHASE"/>
    <property type="match status" value="1"/>
</dbReference>
<dbReference type="Pfam" id="PF01264">
    <property type="entry name" value="Chorismate_synt"/>
    <property type="match status" value="1"/>
</dbReference>
<dbReference type="PIRSF" id="PIRSF001456">
    <property type="entry name" value="Chorismate_synth"/>
    <property type="match status" value="1"/>
</dbReference>
<dbReference type="SUPFAM" id="SSF103263">
    <property type="entry name" value="Chorismate synthase, AroC"/>
    <property type="match status" value="1"/>
</dbReference>
<dbReference type="PROSITE" id="PS00787">
    <property type="entry name" value="CHORISMATE_SYNTHASE_1"/>
    <property type="match status" value="1"/>
</dbReference>
<dbReference type="PROSITE" id="PS00788">
    <property type="entry name" value="CHORISMATE_SYNTHASE_2"/>
    <property type="match status" value="1"/>
</dbReference>
<dbReference type="PROSITE" id="PS00789">
    <property type="entry name" value="CHORISMATE_SYNTHASE_3"/>
    <property type="match status" value="1"/>
</dbReference>
<evidence type="ECO:0000255" key="1">
    <source>
        <dbReference type="HAMAP-Rule" id="MF_00300"/>
    </source>
</evidence>
<reference key="1">
    <citation type="journal article" date="2003" name="Proc. Natl. Acad. Sci. U.S.A.">
        <title>Complete genome sequence and analysis of Wolinella succinogenes.</title>
        <authorList>
            <person name="Baar C."/>
            <person name="Eppinger M."/>
            <person name="Raddatz G."/>
            <person name="Simon J."/>
            <person name="Lanz C."/>
            <person name="Klimmek O."/>
            <person name="Nandakumar R."/>
            <person name="Gross R."/>
            <person name="Rosinus A."/>
            <person name="Keller H."/>
            <person name="Jagtap P."/>
            <person name="Linke B."/>
            <person name="Meyer F."/>
            <person name="Lederer H."/>
            <person name="Schuster S.C."/>
        </authorList>
    </citation>
    <scope>NUCLEOTIDE SEQUENCE [LARGE SCALE GENOMIC DNA]</scope>
    <source>
        <strain>ATCC 29543 / DSM 1740 / CCUG 13145 / JCM 31913 / LMG 7466 / NCTC 11488 / FDC 602W</strain>
    </source>
</reference>
<keyword id="KW-0028">Amino-acid biosynthesis</keyword>
<keyword id="KW-0057">Aromatic amino acid biosynthesis</keyword>
<keyword id="KW-0274">FAD</keyword>
<keyword id="KW-0285">Flavoprotein</keyword>
<keyword id="KW-0288">FMN</keyword>
<keyword id="KW-0456">Lyase</keyword>
<keyword id="KW-0521">NADP</keyword>
<keyword id="KW-1185">Reference proteome</keyword>
<gene>
    <name evidence="1" type="primary">aroC</name>
    <name type="ordered locus">WS1897</name>
</gene>